<organism>
    <name type="scientific">Proteus mirabilis (strain HI4320)</name>
    <dbReference type="NCBI Taxonomy" id="529507"/>
    <lineage>
        <taxon>Bacteria</taxon>
        <taxon>Pseudomonadati</taxon>
        <taxon>Pseudomonadota</taxon>
        <taxon>Gammaproteobacteria</taxon>
        <taxon>Enterobacterales</taxon>
        <taxon>Morganellaceae</taxon>
        <taxon>Proteus</taxon>
    </lineage>
</organism>
<dbReference type="EMBL" id="Z35428">
    <property type="protein sequence ID" value="CAA84591.1"/>
    <property type="molecule type" value="Genomic_DNA"/>
</dbReference>
<dbReference type="EMBL" id="AM942759">
    <property type="protein sequence ID" value="CAR43898.1"/>
    <property type="molecule type" value="Genomic_DNA"/>
</dbReference>
<dbReference type="RefSeq" id="WP_004243877.1">
    <property type="nucleotide sequence ID" value="NC_010554.1"/>
</dbReference>
<dbReference type="SMR" id="P53520"/>
<dbReference type="EnsemblBacteria" id="CAR43898">
    <property type="protein sequence ID" value="CAR43898"/>
    <property type="gene ID" value="PMI1879"/>
</dbReference>
<dbReference type="GeneID" id="6802209"/>
<dbReference type="KEGG" id="pmr:PMI1879"/>
<dbReference type="eggNOG" id="COG3121">
    <property type="taxonomic scope" value="Bacteria"/>
</dbReference>
<dbReference type="HOGENOM" id="CLU_070768_5_1_6"/>
<dbReference type="Proteomes" id="UP000008319">
    <property type="component" value="Chromosome"/>
</dbReference>
<dbReference type="GO" id="GO:0030288">
    <property type="term" value="C:outer membrane-bounded periplasmic space"/>
    <property type="evidence" value="ECO:0007669"/>
    <property type="project" value="InterPro"/>
</dbReference>
<dbReference type="GO" id="GO:0071555">
    <property type="term" value="P:cell wall organization"/>
    <property type="evidence" value="ECO:0007669"/>
    <property type="project" value="InterPro"/>
</dbReference>
<dbReference type="GO" id="GO:0061077">
    <property type="term" value="P:chaperone-mediated protein folding"/>
    <property type="evidence" value="ECO:0007669"/>
    <property type="project" value="InterPro"/>
</dbReference>
<dbReference type="FunFam" id="2.60.40.10:FF:000458">
    <property type="entry name" value="Molecular chaperone FimC"/>
    <property type="match status" value="1"/>
</dbReference>
<dbReference type="Gene3D" id="2.60.40.10">
    <property type="entry name" value="Immunoglobulins"/>
    <property type="match status" value="2"/>
</dbReference>
<dbReference type="InterPro" id="IPR013783">
    <property type="entry name" value="Ig-like_fold"/>
</dbReference>
<dbReference type="InterPro" id="IPR008962">
    <property type="entry name" value="PapD-like_sf"/>
</dbReference>
<dbReference type="InterPro" id="IPR050643">
    <property type="entry name" value="Periplasmic_pilus_chap"/>
</dbReference>
<dbReference type="InterPro" id="IPR036316">
    <property type="entry name" value="Pili_assmbl_chap_C_dom_sf"/>
</dbReference>
<dbReference type="InterPro" id="IPR001829">
    <property type="entry name" value="Pili_assmbl_chaperone_bac"/>
</dbReference>
<dbReference type="InterPro" id="IPR016148">
    <property type="entry name" value="Pili_assmbl_chaperone_C"/>
</dbReference>
<dbReference type="InterPro" id="IPR018046">
    <property type="entry name" value="Pili_assmbl_chaperone_CS"/>
</dbReference>
<dbReference type="InterPro" id="IPR016147">
    <property type="entry name" value="Pili_assmbl_chaperone_N"/>
</dbReference>
<dbReference type="PANTHER" id="PTHR30251:SF5">
    <property type="entry name" value="FIMBRIAL CHAPARONE PROTEIN"/>
    <property type="match status" value="1"/>
</dbReference>
<dbReference type="PANTHER" id="PTHR30251">
    <property type="entry name" value="PILUS ASSEMBLY CHAPERONE"/>
    <property type="match status" value="1"/>
</dbReference>
<dbReference type="Pfam" id="PF02753">
    <property type="entry name" value="PapD_C"/>
    <property type="match status" value="1"/>
</dbReference>
<dbReference type="Pfam" id="PF00345">
    <property type="entry name" value="PapD_N"/>
    <property type="match status" value="1"/>
</dbReference>
<dbReference type="PRINTS" id="PR00969">
    <property type="entry name" value="CHAPERONPILI"/>
</dbReference>
<dbReference type="SUPFAM" id="SSF49354">
    <property type="entry name" value="PapD-like"/>
    <property type="match status" value="1"/>
</dbReference>
<dbReference type="SUPFAM" id="SSF49584">
    <property type="entry name" value="Periplasmic chaperone C-domain"/>
    <property type="match status" value="1"/>
</dbReference>
<dbReference type="PROSITE" id="PS00635">
    <property type="entry name" value="PILI_CHAPERONE"/>
    <property type="match status" value="1"/>
</dbReference>
<proteinExistence type="inferred from homology"/>
<name>PMFD_PROMH</name>
<reference key="1">
    <citation type="journal article" date="1994" name="Gene">
        <title>Genetic organization and complete sequence of the Proteus mirabilis pmf fimbrial operon.</title>
        <authorList>
            <person name="Massad G."/>
            <person name="Mobley H.L.T."/>
        </authorList>
    </citation>
    <scope>NUCLEOTIDE SEQUENCE [GENOMIC DNA]</scope>
</reference>
<reference key="2">
    <citation type="journal article" date="2008" name="J. Bacteriol.">
        <title>Complete genome sequence of uropathogenic Proteus mirabilis, a master of both adherence and motility.</title>
        <authorList>
            <person name="Pearson M.M."/>
            <person name="Sebaihia M."/>
            <person name="Churcher C."/>
            <person name="Quail M.A."/>
            <person name="Seshasayee A.S."/>
            <person name="Luscombe N.M."/>
            <person name="Abdellah Z."/>
            <person name="Arrosmith C."/>
            <person name="Atkin B."/>
            <person name="Chillingworth T."/>
            <person name="Hauser H."/>
            <person name="Jagels K."/>
            <person name="Moule S."/>
            <person name="Mungall K."/>
            <person name="Norbertczak H."/>
            <person name="Rabbinowitsch E."/>
            <person name="Walker D."/>
            <person name="Whithead S."/>
            <person name="Thomson N.R."/>
            <person name="Rather P.N."/>
            <person name="Parkhill J."/>
            <person name="Mobley H.L.T."/>
        </authorList>
    </citation>
    <scope>NUCLEOTIDE SEQUENCE [LARGE SCALE GENOMIC DNA]</scope>
    <source>
        <strain>HI4320</strain>
    </source>
</reference>
<accession>P53520</accession>
<accession>B4F038</accession>
<sequence>MNSFSTLKTLFCGSLLALSLVNTTQAGVSLDRTRIVLTGNENSASVNLKNTSPDIPFLAQSWVENENGQKISSPLVALPPLQRLDGAQKGVVRITKTAEVGLLPQDRESLFYLNVREIPPAPKQANVLQMAMQSRIKLFYRPSAIVPEKPGMVWQDQLVFKKQGNKFIVNNPTPYYITIISLSNKLNGEDSDKLTTFPGLMVAPKASLDIPVKTSNVNQFYMMYVNDYGGHPELKFVCQQDSCKVAPKDQQPKY</sequence>
<feature type="signal peptide" evidence="1">
    <location>
        <begin position="1"/>
        <end position="26"/>
    </location>
</feature>
<feature type="chain" id="PRO_0000009286" description="Chaperone protein PmfD">
    <location>
        <begin position="27"/>
        <end position="254"/>
    </location>
</feature>
<evidence type="ECO:0000255" key="1"/>
<evidence type="ECO:0000305" key="2"/>
<keyword id="KW-0143">Chaperone</keyword>
<keyword id="KW-1029">Fimbrium biogenesis</keyword>
<keyword id="KW-0393">Immunoglobulin domain</keyword>
<keyword id="KW-0574">Periplasm</keyword>
<keyword id="KW-1185">Reference proteome</keyword>
<keyword id="KW-0732">Signal</keyword>
<gene>
    <name type="primary">pmfD</name>
    <name type="ordered locus">PMI1879</name>
</gene>
<protein>
    <recommendedName>
        <fullName>Chaperone protein PmfD</fullName>
    </recommendedName>
</protein>
<comment type="function">
    <text>Involved in the biogenesis of the PMF fimbria.</text>
</comment>
<comment type="subcellular location">
    <subcellularLocation>
        <location evidence="2">Periplasm</location>
    </subcellularLocation>
</comment>
<comment type="similarity">
    <text evidence="2">Belongs to the periplasmic pilus chaperone family.</text>
</comment>